<reference key="1">
    <citation type="journal article" date="2005" name="Nat. Biotechnol.">
        <title>Complete genome sequence of the acetic acid bacterium Gluconobacter oxydans.</title>
        <authorList>
            <person name="Prust C."/>
            <person name="Hoffmeister M."/>
            <person name="Liesegang H."/>
            <person name="Wiezer A."/>
            <person name="Fricke W.F."/>
            <person name="Ehrenreich A."/>
            <person name="Gottschalk G."/>
            <person name="Deppenmeier U."/>
        </authorList>
    </citation>
    <scope>NUCLEOTIDE SEQUENCE [LARGE SCALE GENOMIC DNA]</scope>
    <source>
        <strain>621H</strain>
    </source>
</reference>
<dbReference type="EC" id="2.7.4.22" evidence="1"/>
<dbReference type="EMBL" id="CP000009">
    <property type="protein sequence ID" value="AAW61551.1"/>
    <property type="status" value="ALT_INIT"/>
    <property type="molecule type" value="Genomic_DNA"/>
</dbReference>
<dbReference type="RefSeq" id="WP_024716835.1">
    <property type="nucleotide sequence ID" value="NC_006677.1"/>
</dbReference>
<dbReference type="SMR" id="Q5FPZ5"/>
<dbReference type="STRING" id="290633.GOX1812"/>
<dbReference type="KEGG" id="gox:GOX1812"/>
<dbReference type="eggNOG" id="COG0528">
    <property type="taxonomic scope" value="Bacteria"/>
</dbReference>
<dbReference type="HOGENOM" id="CLU_033861_0_0_5"/>
<dbReference type="UniPathway" id="UPA00159">
    <property type="reaction ID" value="UER00275"/>
</dbReference>
<dbReference type="Proteomes" id="UP000006375">
    <property type="component" value="Chromosome"/>
</dbReference>
<dbReference type="GO" id="GO:0005737">
    <property type="term" value="C:cytoplasm"/>
    <property type="evidence" value="ECO:0007669"/>
    <property type="project" value="UniProtKB-SubCell"/>
</dbReference>
<dbReference type="GO" id="GO:0005524">
    <property type="term" value="F:ATP binding"/>
    <property type="evidence" value="ECO:0007669"/>
    <property type="project" value="UniProtKB-KW"/>
</dbReference>
<dbReference type="GO" id="GO:0033862">
    <property type="term" value="F:UMP kinase activity"/>
    <property type="evidence" value="ECO:0007669"/>
    <property type="project" value="UniProtKB-EC"/>
</dbReference>
<dbReference type="GO" id="GO:0044210">
    <property type="term" value="P:'de novo' CTP biosynthetic process"/>
    <property type="evidence" value="ECO:0007669"/>
    <property type="project" value="UniProtKB-UniRule"/>
</dbReference>
<dbReference type="GO" id="GO:0006225">
    <property type="term" value="P:UDP biosynthetic process"/>
    <property type="evidence" value="ECO:0007669"/>
    <property type="project" value="TreeGrafter"/>
</dbReference>
<dbReference type="CDD" id="cd04254">
    <property type="entry name" value="AAK_UMPK-PyrH-Ec"/>
    <property type="match status" value="1"/>
</dbReference>
<dbReference type="FunFam" id="3.40.1160.10:FF:000001">
    <property type="entry name" value="Uridylate kinase"/>
    <property type="match status" value="1"/>
</dbReference>
<dbReference type="Gene3D" id="3.40.1160.10">
    <property type="entry name" value="Acetylglutamate kinase-like"/>
    <property type="match status" value="1"/>
</dbReference>
<dbReference type="HAMAP" id="MF_01220_B">
    <property type="entry name" value="PyrH_B"/>
    <property type="match status" value="1"/>
</dbReference>
<dbReference type="InterPro" id="IPR036393">
    <property type="entry name" value="AceGlu_kinase-like_sf"/>
</dbReference>
<dbReference type="InterPro" id="IPR001048">
    <property type="entry name" value="Asp/Glu/Uridylate_kinase"/>
</dbReference>
<dbReference type="InterPro" id="IPR011817">
    <property type="entry name" value="Uridylate_kinase"/>
</dbReference>
<dbReference type="InterPro" id="IPR015963">
    <property type="entry name" value="Uridylate_kinase_bac"/>
</dbReference>
<dbReference type="NCBIfam" id="TIGR02075">
    <property type="entry name" value="pyrH_bact"/>
    <property type="match status" value="1"/>
</dbReference>
<dbReference type="PANTHER" id="PTHR42833">
    <property type="entry name" value="URIDYLATE KINASE"/>
    <property type="match status" value="1"/>
</dbReference>
<dbReference type="PANTHER" id="PTHR42833:SF4">
    <property type="entry name" value="URIDYLATE KINASE PUMPKIN, CHLOROPLASTIC"/>
    <property type="match status" value="1"/>
</dbReference>
<dbReference type="Pfam" id="PF00696">
    <property type="entry name" value="AA_kinase"/>
    <property type="match status" value="1"/>
</dbReference>
<dbReference type="PIRSF" id="PIRSF005650">
    <property type="entry name" value="Uridylate_kin"/>
    <property type="match status" value="1"/>
</dbReference>
<dbReference type="SUPFAM" id="SSF53633">
    <property type="entry name" value="Carbamate kinase-like"/>
    <property type="match status" value="1"/>
</dbReference>
<proteinExistence type="inferred from homology"/>
<keyword id="KW-0067">ATP-binding</keyword>
<keyword id="KW-0963">Cytoplasm</keyword>
<keyword id="KW-0418">Kinase</keyword>
<keyword id="KW-0547">Nucleotide-binding</keyword>
<keyword id="KW-0665">Pyrimidine biosynthesis</keyword>
<keyword id="KW-1185">Reference proteome</keyword>
<keyword id="KW-0808">Transferase</keyword>
<comment type="function">
    <text evidence="1">Catalyzes the reversible phosphorylation of UMP to UDP.</text>
</comment>
<comment type="catalytic activity">
    <reaction evidence="1">
        <text>UMP + ATP = UDP + ADP</text>
        <dbReference type="Rhea" id="RHEA:24400"/>
        <dbReference type="ChEBI" id="CHEBI:30616"/>
        <dbReference type="ChEBI" id="CHEBI:57865"/>
        <dbReference type="ChEBI" id="CHEBI:58223"/>
        <dbReference type="ChEBI" id="CHEBI:456216"/>
        <dbReference type="EC" id="2.7.4.22"/>
    </reaction>
</comment>
<comment type="activity regulation">
    <text evidence="1">Inhibited by UTP.</text>
</comment>
<comment type="pathway">
    <text evidence="1">Pyrimidine metabolism; CTP biosynthesis via de novo pathway; UDP from UMP (UMPK route): step 1/1.</text>
</comment>
<comment type="subunit">
    <text evidence="1">Homohexamer.</text>
</comment>
<comment type="subcellular location">
    <subcellularLocation>
        <location evidence="1">Cytoplasm</location>
    </subcellularLocation>
</comment>
<comment type="similarity">
    <text evidence="1">Belongs to the UMP kinase family.</text>
</comment>
<comment type="sequence caution" evidence="2">
    <conflict type="erroneous initiation">
        <sequence resource="EMBL-CDS" id="AAW61551"/>
    </conflict>
</comment>
<sequence length="246" mass="26464">MMTENREQSPSYKRVLLKVSGEALMGDGPSGVDPVMVDMVAADIADVVASGVEVCLVVGGGNIFRGLAAAAKGMDRAQGDYAGMLATVINALMLQNALERRGMETRVMTAIQMAAIAEPYIRRRAVRHMEKGRVVIFAAGTGNPFFTTDTAAALRANEMECDALFKGTQVDGVYSADPRRNPDAERYDQLTYLEVLARDLNVMDAAAISLARENKLPIVVFNMHAPGSFGAVMRGEGLFTKIIEAD</sequence>
<gene>
    <name evidence="1" type="primary">pyrH</name>
    <name type="ordered locus">GOX1812</name>
</gene>
<feature type="chain" id="PRO_0000323858" description="Uridylate kinase">
    <location>
        <begin position="1"/>
        <end position="246"/>
    </location>
</feature>
<feature type="binding site" evidence="1">
    <location>
        <begin position="18"/>
        <end position="21"/>
    </location>
    <ligand>
        <name>ATP</name>
        <dbReference type="ChEBI" id="CHEBI:30616"/>
    </ligand>
</feature>
<feature type="binding site" evidence="1">
    <location>
        <position position="60"/>
    </location>
    <ligand>
        <name>UMP</name>
        <dbReference type="ChEBI" id="CHEBI:57865"/>
    </ligand>
</feature>
<feature type="binding site" evidence="1">
    <location>
        <position position="61"/>
    </location>
    <ligand>
        <name>ATP</name>
        <dbReference type="ChEBI" id="CHEBI:30616"/>
    </ligand>
</feature>
<feature type="binding site" evidence="1">
    <location>
        <position position="65"/>
    </location>
    <ligand>
        <name>ATP</name>
        <dbReference type="ChEBI" id="CHEBI:30616"/>
    </ligand>
</feature>
<feature type="binding site" evidence="1">
    <location>
        <position position="80"/>
    </location>
    <ligand>
        <name>UMP</name>
        <dbReference type="ChEBI" id="CHEBI:57865"/>
    </ligand>
</feature>
<feature type="binding site" evidence="1">
    <location>
        <begin position="141"/>
        <end position="148"/>
    </location>
    <ligand>
        <name>UMP</name>
        <dbReference type="ChEBI" id="CHEBI:57865"/>
    </ligand>
</feature>
<feature type="binding site" evidence="1">
    <location>
        <position position="168"/>
    </location>
    <ligand>
        <name>ATP</name>
        <dbReference type="ChEBI" id="CHEBI:30616"/>
    </ligand>
</feature>
<feature type="binding site" evidence="1">
    <location>
        <position position="169"/>
    </location>
    <ligand>
        <name>ATP</name>
        <dbReference type="ChEBI" id="CHEBI:30616"/>
    </ligand>
</feature>
<feature type="binding site" evidence="1">
    <location>
        <position position="174"/>
    </location>
    <ligand>
        <name>ATP</name>
        <dbReference type="ChEBI" id="CHEBI:30616"/>
    </ligand>
</feature>
<feature type="binding site" evidence="1">
    <location>
        <position position="177"/>
    </location>
    <ligand>
        <name>ATP</name>
        <dbReference type="ChEBI" id="CHEBI:30616"/>
    </ligand>
</feature>
<organism>
    <name type="scientific">Gluconobacter oxydans (strain 621H)</name>
    <name type="common">Gluconobacter suboxydans</name>
    <dbReference type="NCBI Taxonomy" id="290633"/>
    <lineage>
        <taxon>Bacteria</taxon>
        <taxon>Pseudomonadati</taxon>
        <taxon>Pseudomonadota</taxon>
        <taxon>Alphaproteobacteria</taxon>
        <taxon>Acetobacterales</taxon>
        <taxon>Acetobacteraceae</taxon>
        <taxon>Gluconobacter</taxon>
    </lineage>
</organism>
<name>PYRH_GLUOX</name>
<accession>Q5FPZ5</accession>
<evidence type="ECO:0000255" key="1">
    <source>
        <dbReference type="HAMAP-Rule" id="MF_01220"/>
    </source>
</evidence>
<evidence type="ECO:0000305" key="2"/>
<protein>
    <recommendedName>
        <fullName evidence="1">Uridylate kinase</fullName>
        <shortName evidence="1">UK</shortName>
        <ecNumber evidence="1">2.7.4.22</ecNumber>
    </recommendedName>
    <alternativeName>
        <fullName evidence="1">Uridine monophosphate kinase</fullName>
        <shortName evidence="1">UMP kinase</shortName>
        <shortName evidence="1">UMPK</shortName>
    </alternativeName>
</protein>